<accession>Q7NDQ2</accession>
<sequence>MDPVQIRSLSLEALAYLGDAVWELHVRTRVLLPPRRLQWLHGDTVACVRASAQAKLATCLSPHLTVEEADWLRRGRNAGGTVPRRLDPATYRLATAFEALLGYLFLADRDRLGVILHLCDEFQHHHGPDTPSPEA</sequence>
<reference key="1">
    <citation type="journal article" date="2003" name="DNA Res.">
        <title>Complete genome structure of Gloeobacter violaceus PCC 7421, a cyanobacterium that lacks thylakoids.</title>
        <authorList>
            <person name="Nakamura Y."/>
            <person name="Kaneko T."/>
            <person name="Sato S."/>
            <person name="Mimuro M."/>
            <person name="Miyashita H."/>
            <person name="Tsuchiya T."/>
            <person name="Sasamoto S."/>
            <person name="Watanabe A."/>
            <person name="Kawashima K."/>
            <person name="Kishida Y."/>
            <person name="Kiyokawa C."/>
            <person name="Kohara M."/>
            <person name="Matsumoto M."/>
            <person name="Matsuno A."/>
            <person name="Nakazaki N."/>
            <person name="Shimpo S."/>
            <person name="Takeuchi C."/>
            <person name="Yamada M."/>
            <person name="Tabata S."/>
        </authorList>
    </citation>
    <scope>NUCLEOTIDE SEQUENCE [LARGE SCALE GENOMIC DNA]</scope>
    <source>
        <strain>ATCC 29082 / PCC 7421</strain>
    </source>
</reference>
<name>MRNC_GLOVI</name>
<dbReference type="EC" id="3.1.26.-" evidence="1"/>
<dbReference type="EMBL" id="BA000045">
    <property type="protein sequence ID" value="BAC92121.1"/>
    <property type="status" value="ALT_INIT"/>
    <property type="molecule type" value="Genomic_DNA"/>
</dbReference>
<dbReference type="RefSeq" id="NP_927126.1">
    <property type="nucleotide sequence ID" value="NC_005125.1"/>
</dbReference>
<dbReference type="RefSeq" id="WP_164929467.1">
    <property type="nucleotide sequence ID" value="NC_005125.1"/>
</dbReference>
<dbReference type="SMR" id="Q7NDQ2"/>
<dbReference type="STRING" id="251221.gene:10761698"/>
<dbReference type="EnsemblBacteria" id="BAC92121">
    <property type="protein sequence ID" value="BAC92121"/>
    <property type="gene ID" value="BAC92121"/>
</dbReference>
<dbReference type="KEGG" id="gvi:glr4180"/>
<dbReference type="eggNOG" id="COG1939">
    <property type="taxonomic scope" value="Bacteria"/>
</dbReference>
<dbReference type="HOGENOM" id="CLU_2219386_0_0_3"/>
<dbReference type="InParanoid" id="Q7NDQ2"/>
<dbReference type="OrthoDB" id="46571at2"/>
<dbReference type="Proteomes" id="UP000000557">
    <property type="component" value="Chromosome"/>
</dbReference>
<dbReference type="GO" id="GO:0005737">
    <property type="term" value="C:cytoplasm"/>
    <property type="evidence" value="ECO:0007669"/>
    <property type="project" value="UniProtKB-SubCell"/>
</dbReference>
<dbReference type="GO" id="GO:0004525">
    <property type="term" value="F:ribonuclease III activity"/>
    <property type="evidence" value="ECO:0007669"/>
    <property type="project" value="InterPro"/>
</dbReference>
<dbReference type="GO" id="GO:0019843">
    <property type="term" value="F:rRNA binding"/>
    <property type="evidence" value="ECO:0007669"/>
    <property type="project" value="UniProtKB-UniRule"/>
</dbReference>
<dbReference type="GO" id="GO:0006364">
    <property type="term" value="P:rRNA processing"/>
    <property type="evidence" value="ECO:0007669"/>
    <property type="project" value="UniProtKB-UniRule"/>
</dbReference>
<dbReference type="Gene3D" id="1.10.1520.10">
    <property type="entry name" value="Ribonuclease III domain"/>
    <property type="match status" value="1"/>
</dbReference>
<dbReference type="HAMAP" id="MF_01468">
    <property type="entry name" value="RNase_Mini_III"/>
    <property type="match status" value="1"/>
</dbReference>
<dbReference type="InterPro" id="IPR008226">
    <property type="entry name" value="Mini3_fam"/>
</dbReference>
<dbReference type="InterPro" id="IPR000999">
    <property type="entry name" value="RNase_III_dom"/>
</dbReference>
<dbReference type="InterPro" id="IPR036389">
    <property type="entry name" value="RNase_III_sf"/>
</dbReference>
<dbReference type="PANTHER" id="PTHR34276">
    <property type="entry name" value="MINI-RIBONUCLEASE 3"/>
    <property type="match status" value="1"/>
</dbReference>
<dbReference type="PANTHER" id="PTHR34276:SF1">
    <property type="entry name" value="MINI-RIBONUCLEASE 3"/>
    <property type="match status" value="1"/>
</dbReference>
<dbReference type="Pfam" id="PF00636">
    <property type="entry name" value="Ribonuclease_3"/>
    <property type="match status" value="1"/>
</dbReference>
<dbReference type="PIRSF" id="PIRSF005520">
    <property type="entry name" value="UCP005520"/>
    <property type="match status" value="1"/>
</dbReference>
<dbReference type="SUPFAM" id="SSF69065">
    <property type="entry name" value="RNase III domain-like"/>
    <property type="match status" value="1"/>
</dbReference>
<comment type="function">
    <text evidence="1">Involved in correct processing of both the 5' and 3' ends of 23S rRNA precursor. Processes 30S rRNA precursor transcript even in absence of ribonuclease 3 (Rnc); Rnc processes 30S rRNA into smaller rRNA precursors.</text>
</comment>
<comment type="cofactor">
    <cofactor evidence="1">
        <name>Mg(2+)</name>
        <dbReference type="ChEBI" id="CHEBI:18420"/>
    </cofactor>
</comment>
<comment type="subunit">
    <text evidence="1">Homodimer.</text>
</comment>
<comment type="subcellular location">
    <subcellularLocation>
        <location evidence="1">Cytoplasm</location>
    </subcellularLocation>
</comment>
<comment type="similarity">
    <text evidence="1">Belongs to the MrnC RNase family.</text>
</comment>
<comment type="sequence caution" evidence="2">
    <conflict type="erroneous initiation">
        <sequence resource="EMBL-CDS" id="BAC92121"/>
    </conflict>
    <text>Truncated N-terminus.</text>
</comment>
<gene>
    <name evidence="1" type="primary">mrnC</name>
    <name type="ordered locus">glr4180</name>
</gene>
<organism>
    <name type="scientific">Gloeobacter violaceus (strain ATCC 29082 / PCC 7421)</name>
    <dbReference type="NCBI Taxonomy" id="251221"/>
    <lineage>
        <taxon>Bacteria</taxon>
        <taxon>Bacillati</taxon>
        <taxon>Cyanobacteriota</taxon>
        <taxon>Cyanophyceae</taxon>
        <taxon>Gloeobacterales</taxon>
        <taxon>Gloeobacteraceae</taxon>
        <taxon>Gloeobacter</taxon>
    </lineage>
</organism>
<feature type="chain" id="PRO_0000415985" description="Mini-ribonuclease 3">
    <location>
        <begin position="1"/>
        <end position="135"/>
    </location>
</feature>
<feature type="active site" evidence="1">
    <location>
        <position position="19"/>
    </location>
</feature>
<keyword id="KW-0963">Cytoplasm</keyword>
<keyword id="KW-0255">Endonuclease</keyword>
<keyword id="KW-0378">Hydrolase</keyword>
<keyword id="KW-0460">Magnesium</keyword>
<keyword id="KW-0540">Nuclease</keyword>
<keyword id="KW-1185">Reference proteome</keyword>
<keyword id="KW-0690">Ribosome biogenesis</keyword>
<keyword id="KW-0694">RNA-binding</keyword>
<keyword id="KW-0698">rRNA processing</keyword>
<keyword id="KW-0699">rRNA-binding</keyword>
<proteinExistence type="inferred from homology"/>
<evidence type="ECO:0000255" key="1">
    <source>
        <dbReference type="HAMAP-Rule" id="MF_01468"/>
    </source>
</evidence>
<evidence type="ECO:0000305" key="2"/>
<protein>
    <recommendedName>
        <fullName evidence="1">Mini-ribonuclease 3</fullName>
        <shortName evidence="1">Mini-3</shortName>
        <shortName evidence="1">Mini-RNase 3</shortName>
        <ecNumber evidence="1">3.1.26.-</ecNumber>
    </recommendedName>
    <alternativeName>
        <fullName evidence="1">Mini-RNase III</fullName>
        <shortName evidence="1">Mini-III</shortName>
    </alternativeName>
</protein>